<sequence length="208" mass="23832">MIFPCLFQSMLNLYAEALSTFSLLFEEAKSSSEIEPDAMMLATASLEGHPSVRTVLLKKFDARGFVFYSHIDSPKGRDLQANPQAALLFLWRSLREAGVQVRIEGRVQQVLAEEADAYFASRPRQSQIGAWASMQSCPLGSPEEFQARLAEVKATFEGRDVPRPEGWVGFRVAPRVLEFWYGARFRLHERWRYEVDAAGYWRKFLLYP</sequence>
<dbReference type="EC" id="1.4.3.5" evidence="1"/>
<dbReference type="EMBL" id="AE003849">
    <property type="protein sequence ID" value="AAF84146.1"/>
    <property type="molecule type" value="Genomic_DNA"/>
</dbReference>
<dbReference type="PIR" id="F82693">
    <property type="entry name" value="F82693"/>
</dbReference>
<dbReference type="SMR" id="Q9PDP2"/>
<dbReference type="STRING" id="160492.XF_1337"/>
<dbReference type="KEGG" id="xfa:XF_1337"/>
<dbReference type="eggNOG" id="COG0259">
    <property type="taxonomic scope" value="Bacteria"/>
</dbReference>
<dbReference type="HOGENOM" id="CLU_032263_2_3_6"/>
<dbReference type="UniPathway" id="UPA01068">
    <property type="reaction ID" value="UER00304"/>
</dbReference>
<dbReference type="UniPathway" id="UPA01068">
    <property type="reaction ID" value="UER00305"/>
</dbReference>
<dbReference type="Proteomes" id="UP000000812">
    <property type="component" value="Chromosome"/>
</dbReference>
<dbReference type="GO" id="GO:0010181">
    <property type="term" value="F:FMN binding"/>
    <property type="evidence" value="ECO:0007669"/>
    <property type="project" value="UniProtKB-UniRule"/>
</dbReference>
<dbReference type="GO" id="GO:0004733">
    <property type="term" value="F:pyridoxamine phosphate oxidase activity"/>
    <property type="evidence" value="ECO:0007669"/>
    <property type="project" value="UniProtKB-UniRule"/>
</dbReference>
<dbReference type="GO" id="GO:0008615">
    <property type="term" value="P:pyridoxine biosynthetic process"/>
    <property type="evidence" value="ECO:0007669"/>
    <property type="project" value="UniProtKB-KW"/>
</dbReference>
<dbReference type="FunFam" id="2.30.110.10:FF:000012">
    <property type="entry name" value="Predicted protein"/>
    <property type="match status" value="1"/>
</dbReference>
<dbReference type="Gene3D" id="2.30.110.10">
    <property type="entry name" value="Electron Transport, Fmn-binding Protein, Chain A"/>
    <property type="match status" value="1"/>
</dbReference>
<dbReference type="HAMAP" id="MF_01629">
    <property type="entry name" value="PdxH"/>
    <property type="match status" value="1"/>
</dbReference>
<dbReference type="InterPro" id="IPR000659">
    <property type="entry name" value="Pyridox_Oxase"/>
</dbReference>
<dbReference type="InterPro" id="IPR019740">
    <property type="entry name" value="Pyridox_Oxase_CS"/>
</dbReference>
<dbReference type="InterPro" id="IPR011576">
    <property type="entry name" value="Pyridox_Oxase_N"/>
</dbReference>
<dbReference type="InterPro" id="IPR019576">
    <property type="entry name" value="Pyridoxamine_oxidase_dimer_C"/>
</dbReference>
<dbReference type="InterPro" id="IPR012349">
    <property type="entry name" value="Split_barrel_FMN-bd"/>
</dbReference>
<dbReference type="NCBIfam" id="TIGR00558">
    <property type="entry name" value="pdxH"/>
    <property type="match status" value="1"/>
</dbReference>
<dbReference type="NCBIfam" id="NF004231">
    <property type="entry name" value="PRK05679.1"/>
    <property type="match status" value="1"/>
</dbReference>
<dbReference type="PANTHER" id="PTHR10851:SF0">
    <property type="entry name" value="PYRIDOXINE-5'-PHOSPHATE OXIDASE"/>
    <property type="match status" value="1"/>
</dbReference>
<dbReference type="PANTHER" id="PTHR10851">
    <property type="entry name" value="PYRIDOXINE-5-PHOSPHATE OXIDASE"/>
    <property type="match status" value="1"/>
</dbReference>
<dbReference type="Pfam" id="PF10590">
    <property type="entry name" value="PNP_phzG_C"/>
    <property type="match status" value="1"/>
</dbReference>
<dbReference type="Pfam" id="PF01243">
    <property type="entry name" value="PNPOx_N"/>
    <property type="match status" value="1"/>
</dbReference>
<dbReference type="PIRSF" id="PIRSF000190">
    <property type="entry name" value="Pyd_amn-ph_oxd"/>
    <property type="match status" value="1"/>
</dbReference>
<dbReference type="SUPFAM" id="SSF50475">
    <property type="entry name" value="FMN-binding split barrel"/>
    <property type="match status" value="1"/>
</dbReference>
<dbReference type="PROSITE" id="PS01064">
    <property type="entry name" value="PYRIDOX_OXIDASE"/>
    <property type="match status" value="1"/>
</dbReference>
<proteinExistence type="inferred from homology"/>
<gene>
    <name evidence="1" type="primary">pdxH</name>
    <name type="ordered locus">XF_1337</name>
</gene>
<feature type="chain" id="PRO_0000167777" description="Pyridoxine/pyridoxamine 5'-phosphate oxidase">
    <location>
        <begin position="1"/>
        <end position="208"/>
    </location>
</feature>
<feature type="binding site" evidence="1">
    <location>
        <begin position="53"/>
        <end position="58"/>
    </location>
    <ligand>
        <name>FMN</name>
        <dbReference type="ChEBI" id="CHEBI:58210"/>
    </ligand>
</feature>
<feature type="binding site" evidence="1">
    <location>
        <position position="58"/>
    </location>
    <ligand>
        <name>substrate</name>
    </ligand>
</feature>
<feature type="binding site" evidence="1">
    <location>
        <begin position="68"/>
        <end position="69"/>
    </location>
    <ligand>
        <name>FMN</name>
        <dbReference type="ChEBI" id="CHEBI:58210"/>
    </ligand>
</feature>
<feature type="binding site" evidence="1">
    <location>
        <position position="75"/>
    </location>
    <ligand>
        <name>FMN</name>
        <dbReference type="ChEBI" id="CHEBI:58210"/>
    </ligand>
</feature>
<feature type="binding site" evidence="1">
    <location>
        <position position="100"/>
    </location>
    <ligand>
        <name>FMN</name>
        <dbReference type="ChEBI" id="CHEBI:58210"/>
    </ligand>
</feature>
<feature type="binding site" evidence="1">
    <location>
        <position position="118"/>
    </location>
    <ligand>
        <name>substrate</name>
    </ligand>
</feature>
<feature type="binding site" evidence="1">
    <location>
        <position position="122"/>
    </location>
    <ligand>
        <name>substrate</name>
    </ligand>
</feature>
<feature type="binding site" evidence="1">
    <location>
        <position position="126"/>
    </location>
    <ligand>
        <name>substrate</name>
    </ligand>
</feature>
<feature type="binding site" evidence="1">
    <location>
        <begin position="135"/>
        <end position="136"/>
    </location>
    <ligand>
        <name>FMN</name>
        <dbReference type="ChEBI" id="CHEBI:58210"/>
    </ligand>
</feature>
<feature type="binding site" evidence="1">
    <location>
        <position position="180"/>
    </location>
    <ligand>
        <name>FMN</name>
        <dbReference type="ChEBI" id="CHEBI:58210"/>
    </ligand>
</feature>
<feature type="binding site" evidence="1">
    <location>
        <begin position="186"/>
        <end position="188"/>
    </location>
    <ligand>
        <name>substrate</name>
    </ligand>
</feature>
<feature type="binding site" evidence="1">
    <location>
        <position position="190"/>
    </location>
    <ligand>
        <name>FMN</name>
        <dbReference type="ChEBI" id="CHEBI:58210"/>
    </ligand>
</feature>
<evidence type="ECO:0000255" key="1">
    <source>
        <dbReference type="HAMAP-Rule" id="MF_01629"/>
    </source>
</evidence>
<protein>
    <recommendedName>
        <fullName evidence="1">Pyridoxine/pyridoxamine 5'-phosphate oxidase</fullName>
        <ecNumber evidence="1">1.4.3.5</ecNumber>
    </recommendedName>
    <alternativeName>
        <fullName evidence="1">PNP/PMP oxidase</fullName>
        <shortName evidence="1">PNPOx</shortName>
    </alternativeName>
    <alternativeName>
        <fullName evidence="1">Pyridoxal 5'-phosphate synthase</fullName>
    </alternativeName>
</protein>
<reference key="1">
    <citation type="journal article" date="2000" name="Nature">
        <title>The genome sequence of the plant pathogen Xylella fastidiosa.</title>
        <authorList>
            <person name="Simpson A.J.G."/>
            <person name="Reinach F.C."/>
            <person name="Arruda P."/>
            <person name="Abreu F.A."/>
            <person name="Acencio M."/>
            <person name="Alvarenga R."/>
            <person name="Alves L.M.C."/>
            <person name="Araya J.E."/>
            <person name="Baia G.S."/>
            <person name="Baptista C.S."/>
            <person name="Barros M.H."/>
            <person name="Bonaccorsi E.D."/>
            <person name="Bordin S."/>
            <person name="Bove J.M."/>
            <person name="Briones M.R.S."/>
            <person name="Bueno M.R.P."/>
            <person name="Camargo A.A."/>
            <person name="Camargo L.E.A."/>
            <person name="Carraro D.M."/>
            <person name="Carrer H."/>
            <person name="Colauto N.B."/>
            <person name="Colombo C."/>
            <person name="Costa F.F."/>
            <person name="Costa M.C.R."/>
            <person name="Costa-Neto C.M."/>
            <person name="Coutinho L.L."/>
            <person name="Cristofani M."/>
            <person name="Dias-Neto E."/>
            <person name="Docena C."/>
            <person name="El-Dorry H."/>
            <person name="Facincani A.P."/>
            <person name="Ferreira A.J.S."/>
            <person name="Ferreira V.C.A."/>
            <person name="Ferro J.A."/>
            <person name="Fraga J.S."/>
            <person name="Franca S.C."/>
            <person name="Franco M.C."/>
            <person name="Frohme M."/>
            <person name="Furlan L.R."/>
            <person name="Garnier M."/>
            <person name="Goldman G.H."/>
            <person name="Goldman M.H.S."/>
            <person name="Gomes S.L."/>
            <person name="Gruber A."/>
            <person name="Ho P.L."/>
            <person name="Hoheisel J.D."/>
            <person name="Junqueira M.L."/>
            <person name="Kemper E.L."/>
            <person name="Kitajima J.P."/>
            <person name="Krieger J.E."/>
            <person name="Kuramae E.E."/>
            <person name="Laigret F."/>
            <person name="Lambais M.R."/>
            <person name="Leite L.C.C."/>
            <person name="Lemos E.G.M."/>
            <person name="Lemos M.V.F."/>
            <person name="Lopes S.A."/>
            <person name="Lopes C.R."/>
            <person name="Machado J.A."/>
            <person name="Machado M.A."/>
            <person name="Madeira A.M.B.N."/>
            <person name="Madeira H.M.F."/>
            <person name="Marino C.L."/>
            <person name="Marques M.V."/>
            <person name="Martins E.A.L."/>
            <person name="Martins E.M.F."/>
            <person name="Matsukuma A.Y."/>
            <person name="Menck C.F.M."/>
            <person name="Miracca E.C."/>
            <person name="Miyaki C.Y."/>
            <person name="Monteiro-Vitorello C.B."/>
            <person name="Moon D.H."/>
            <person name="Nagai M.A."/>
            <person name="Nascimento A.L.T.O."/>
            <person name="Netto L.E.S."/>
            <person name="Nhani A. Jr."/>
            <person name="Nobrega F.G."/>
            <person name="Nunes L.R."/>
            <person name="Oliveira M.A."/>
            <person name="de Oliveira M.C."/>
            <person name="de Oliveira R.C."/>
            <person name="Palmieri D.A."/>
            <person name="Paris A."/>
            <person name="Peixoto B.R."/>
            <person name="Pereira G.A.G."/>
            <person name="Pereira H.A. Jr."/>
            <person name="Pesquero J.B."/>
            <person name="Quaggio R.B."/>
            <person name="Roberto P.G."/>
            <person name="Rodrigues V."/>
            <person name="de Rosa A.J.M."/>
            <person name="de Rosa V.E. Jr."/>
            <person name="de Sa R.G."/>
            <person name="Santelli R.V."/>
            <person name="Sawasaki H.E."/>
            <person name="da Silva A.C.R."/>
            <person name="da Silva A.M."/>
            <person name="da Silva F.R."/>
            <person name="Silva W.A. Jr."/>
            <person name="da Silveira J.F."/>
            <person name="Silvestri M.L.Z."/>
            <person name="Siqueira W.J."/>
            <person name="de Souza A.A."/>
            <person name="de Souza A.P."/>
            <person name="Terenzi M.F."/>
            <person name="Truffi D."/>
            <person name="Tsai S.M."/>
            <person name="Tsuhako M.H."/>
            <person name="Vallada H."/>
            <person name="Van Sluys M.A."/>
            <person name="Verjovski-Almeida S."/>
            <person name="Vettore A.L."/>
            <person name="Zago M.A."/>
            <person name="Zatz M."/>
            <person name="Meidanis J."/>
            <person name="Setubal J.C."/>
        </authorList>
    </citation>
    <scope>NUCLEOTIDE SEQUENCE [LARGE SCALE GENOMIC DNA]</scope>
    <source>
        <strain>9a5c</strain>
    </source>
</reference>
<comment type="function">
    <text evidence="1">Catalyzes the oxidation of either pyridoxine 5'-phosphate (PNP) or pyridoxamine 5'-phosphate (PMP) into pyridoxal 5'-phosphate (PLP).</text>
</comment>
<comment type="catalytic activity">
    <reaction evidence="1">
        <text>pyridoxamine 5'-phosphate + O2 + H2O = pyridoxal 5'-phosphate + H2O2 + NH4(+)</text>
        <dbReference type="Rhea" id="RHEA:15817"/>
        <dbReference type="ChEBI" id="CHEBI:15377"/>
        <dbReference type="ChEBI" id="CHEBI:15379"/>
        <dbReference type="ChEBI" id="CHEBI:16240"/>
        <dbReference type="ChEBI" id="CHEBI:28938"/>
        <dbReference type="ChEBI" id="CHEBI:58451"/>
        <dbReference type="ChEBI" id="CHEBI:597326"/>
        <dbReference type="EC" id="1.4.3.5"/>
    </reaction>
</comment>
<comment type="catalytic activity">
    <reaction evidence="1">
        <text>pyridoxine 5'-phosphate + O2 = pyridoxal 5'-phosphate + H2O2</text>
        <dbReference type="Rhea" id="RHEA:15149"/>
        <dbReference type="ChEBI" id="CHEBI:15379"/>
        <dbReference type="ChEBI" id="CHEBI:16240"/>
        <dbReference type="ChEBI" id="CHEBI:58589"/>
        <dbReference type="ChEBI" id="CHEBI:597326"/>
        <dbReference type="EC" id="1.4.3.5"/>
    </reaction>
</comment>
<comment type="cofactor">
    <cofactor evidence="1">
        <name>FMN</name>
        <dbReference type="ChEBI" id="CHEBI:58210"/>
    </cofactor>
    <text evidence="1">Binds 1 FMN per subunit.</text>
</comment>
<comment type="pathway">
    <text evidence="1">Cofactor metabolism; pyridoxal 5'-phosphate salvage; pyridoxal 5'-phosphate from pyridoxamine 5'-phosphate: step 1/1.</text>
</comment>
<comment type="pathway">
    <text evidence="1">Cofactor metabolism; pyridoxal 5'-phosphate salvage; pyridoxal 5'-phosphate from pyridoxine 5'-phosphate: step 1/1.</text>
</comment>
<comment type="subunit">
    <text evidence="1">Homodimer.</text>
</comment>
<comment type="similarity">
    <text evidence="1">Belongs to the pyridoxamine 5'-phosphate oxidase family.</text>
</comment>
<accession>Q9PDP2</accession>
<name>PDXH_XYLFA</name>
<organism>
    <name type="scientific">Xylella fastidiosa (strain 9a5c)</name>
    <dbReference type="NCBI Taxonomy" id="160492"/>
    <lineage>
        <taxon>Bacteria</taxon>
        <taxon>Pseudomonadati</taxon>
        <taxon>Pseudomonadota</taxon>
        <taxon>Gammaproteobacteria</taxon>
        <taxon>Lysobacterales</taxon>
        <taxon>Lysobacteraceae</taxon>
        <taxon>Xylella</taxon>
    </lineage>
</organism>
<keyword id="KW-0285">Flavoprotein</keyword>
<keyword id="KW-0288">FMN</keyword>
<keyword id="KW-0560">Oxidoreductase</keyword>
<keyword id="KW-0664">Pyridoxine biosynthesis</keyword>